<proteinExistence type="inferred from homology"/>
<gene>
    <name evidence="1" type="primary">hslO</name>
    <name type="ordered locus">SE_2271</name>
</gene>
<dbReference type="EMBL" id="AE015929">
    <property type="protein sequence ID" value="AAO05913.1"/>
    <property type="molecule type" value="Genomic_DNA"/>
</dbReference>
<dbReference type="RefSeq" id="NP_765826.1">
    <property type="nucleotide sequence ID" value="NC_004461.1"/>
</dbReference>
<dbReference type="RefSeq" id="WP_001832190.1">
    <property type="nucleotide sequence ID" value="NZ_WBME01000023.1"/>
</dbReference>
<dbReference type="SMR" id="Q8CMT5"/>
<dbReference type="GeneID" id="50019577"/>
<dbReference type="KEGG" id="sep:SE_2271"/>
<dbReference type="PATRIC" id="fig|176280.10.peg.2214"/>
<dbReference type="eggNOG" id="COG1281">
    <property type="taxonomic scope" value="Bacteria"/>
</dbReference>
<dbReference type="HOGENOM" id="CLU_054493_1_0_9"/>
<dbReference type="OrthoDB" id="9776534at2"/>
<dbReference type="Proteomes" id="UP000001411">
    <property type="component" value="Chromosome"/>
</dbReference>
<dbReference type="GO" id="GO:0005737">
    <property type="term" value="C:cytoplasm"/>
    <property type="evidence" value="ECO:0007669"/>
    <property type="project" value="UniProtKB-SubCell"/>
</dbReference>
<dbReference type="GO" id="GO:0044183">
    <property type="term" value="F:protein folding chaperone"/>
    <property type="evidence" value="ECO:0007669"/>
    <property type="project" value="TreeGrafter"/>
</dbReference>
<dbReference type="GO" id="GO:0051082">
    <property type="term" value="F:unfolded protein binding"/>
    <property type="evidence" value="ECO:0007669"/>
    <property type="project" value="UniProtKB-UniRule"/>
</dbReference>
<dbReference type="GO" id="GO:0042026">
    <property type="term" value="P:protein refolding"/>
    <property type="evidence" value="ECO:0007669"/>
    <property type="project" value="TreeGrafter"/>
</dbReference>
<dbReference type="CDD" id="cd00498">
    <property type="entry name" value="Hsp33"/>
    <property type="match status" value="1"/>
</dbReference>
<dbReference type="Gene3D" id="3.55.30.10">
    <property type="entry name" value="Hsp33 domain"/>
    <property type="match status" value="1"/>
</dbReference>
<dbReference type="Gene3D" id="3.90.1280.10">
    <property type="entry name" value="HSP33 redox switch-like"/>
    <property type="match status" value="1"/>
</dbReference>
<dbReference type="HAMAP" id="MF_00117">
    <property type="entry name" value="HslO"/>
    <property type="match status" value="1"/>
</dbReference>
<dbReference type="InterPro" id="IPR000397">
    <property type="entry name" value="Heat_shock_Hsp33"/>
</dbReference>
<dbReference type="InterPro" id="IPR016154">
    <property type="entry name" value="Heat_shock_Hsp33_C"/>
</dbReference>
<dbReference type="InterPro" id="IPR016153">
    <property type="entry name" value="Heat_shock_Hsp33_N"/>
</dbReference>
<dbReference type="NCBIfam" id="NF001033">
    <property type="entry name" value="PRK00114.1"/>
    <property type="match status" value="1"/>
</dbReference>
<dbReference type="PANTHER" id="PTHR30111">
    <property type="entry name" value="33 KDA CHAPERONIN"/>
    <property type="match status" value="1"/>
</dbReference>
<dbReference type="PANTHER" id="PTHR30111:SF1">
    <property type="entry name" value="33 KDA CHAPERONIN"/>
    <property type="match status" value="1"/>
</dbReference>
<dbReference type="Pfam" id="PF01430">
    <property type="entry name" value="HSP33"/>
    <property type="match status" value="1"/>
</dbReference>
<dbReference type="PIRSF" id="PIRSF005261">
    <property type="entry name" value="Heat_shock_Hsp33"/>
    <property type="match status" value="1"/>
</dbReference>
<dbReference type="SUPFAM" id="SSF64397">
    <property type="entry name" value="Hsp33 domain"/>
    <property type="match status" value="1"/>
</dbReference>
<dbReference type="SUPFAM" id="SSF118352">
    <property type="entry name" value="HSP33 redox switch-like"/>
    <property type="match status" value="1"/>
</dbReference>
<keyword id="KW-0143">Chaperone</keyword>
<keyword id="KW-0963">Cytoplasm</keyword>
<keyword id="KW-1015">Disulfide bond</keyword>
<keyword id="KW-0676">Redox-active center</keyword>
<keyword id="KW-0862">Zinc</keyword>
<feature type="chain" id="PRO_0000192205" description="33 kDa chaperonin">
    <location>
        <begin position="1"/>
        <end position="293"/>
    </location>
</feature>
<feature type="disulfide bond" description="Redox-active" evidence="1">
    <location>
        <begin position="238"/>
        <end position="240"/>
    </location>
</feature>
<feature type="disulfide bond" description="Redox-active" evidence="1">
    <location>
        <begin position="271"/>
        <end position="274"/>
    </location>
</feature>
<protein>
    <recommendedName>
        <fullName evidence="1">33 kDa chaperonin</fullName>
    </recommendedName>
    <alternativeName>
        <fullName evidence="1">Heat shock protein 33 homolog</fullName>
        <shortName evidence="1">HSP33</shortName>
    </alternativeName>
</protein>
<reference key="1">
    <citation type="journal article" date="2003" name="Mol. Microbiol.">
        <title>Genome-based analysis of virulence genes in a non-biofilm-forming Staphylococcus epidermidis strain (ATCC 12228).</title>
        <authorList>
            <person name="Zhang Y.-Q."/>
            <person name="Ren S.-X."/>
            <person name="Li H.-L."/>
            <person name="Wang Y.-X."/>
            <person name="Fu G."/>
            <person name="Yang J."/>
            <person name="Qin Z.-Q."/>
            <person name="Miao Y.-G."/>
            <person name="Wang W.-Y."/>
            <person name="Chen R.-S."/>
            <person name="Shen Y."/>
            <person name="Chen Z."/>
            <person name="Yuan Z.-H."/>
            <person name="Zhao G.-P."/>
            <person name="Qu D."/>
            <person name="Danchin A."/>
            <person name="Wen Y.-M."/>
        </authorList>
    </citation>
    <scope>NUCLEOTIDE SEQUENCE [LARGE SCALE GENOMIC DNA]</scope>
    <source>
        <strain>ATCC 12228 / FDA PCI 1200</strain>
    </source>
</reference>
<accession>Q8CMT5</accession>
<sequence>MTHDYIVRGLAYGGEIRAYAAITTESVQEAQTRHYTWPTASAAMGRTMTATVMMGAMLKGNQKLTVTVDGKGPIGRIIADADAQGNVRAYVDHPQTHFPLNDQGKLDVRRAVGTDGSIQVVKDVGMKDYFSGASPIVSGELGDDFTYYYATSEQTPSSVGLGVLVNPDNSIKAAGGFIIQVMPGATDETVTKLEEAISQMQPVSKLIEQGLTPEGILNEILGEGNVQILNSTSAQFECNCSHEKFLNAIKGLGEAEIHSMIKEDHGAEAVCHFCGNKYQYSESELEDLLETMK</sequence>
<name>HSLO_STAES</name>
<organism>
    <name type="scientific">Staphylococcus epidermidis (strain ATCC 12228 / FDA PCI 1200)</name>
    <dbReference type="NCBI Taxonomy" id="176280"/>
    <lineage>
        <taxon>Bacteria</taxon>
        <taxon>Bacillati</taxon>
        <taxon>Bacillota</taxon>
        <taxon>Bacilli</taxon>
        <taxon>Bacillales</taxon>
        <taxon>Staphylococcaceae</taxon>
        <taxon>Staphylococcus</taxon>
    </lineage>
</organism>
<comment type="function">
    <text evidence="1">Redox regulated molecular chaperone. Protects both thermally unfolding and oxidatively damaged proteins from irreversible aggregation. Plays an important role in the bacterial defense system toward oxidative stress.</text>
</comment>
<comment type="subcellular location">
    <subcellularLocation>
        <location evidence="1">Cytoplasm</location>
    </subcellularLocation>
</comment>
<comment type="PTM">
    <text evidence="1">Under oxidizing conditions two disulfide bonds are formed involving the reactive cysteines. Under reducing conditions zinc is bound to the reactive cysteines and the protein is inactive.</text>
</comment>
<comment type="similarity">
    <text evidence="1">Belongs to the HSP33 family.</text>
</comment>
<evidence type="ECO:0000255" key="1">
    <source>
        <dbReference type="HAMAP-Rule" id="MF_00117"/>
    </source>
</evidence>